<accession>Q0AKD6</accession>
<feature type="chain" id="PRO_1000021298" description="Shikimate dehydrogenase (NADP(+))">
    <location>
        <begin position="1"/>
        <end position="280"/>
    </location>
</feature>
<feature type="active site" description="Proton acceptor" evidence="1">
    <location>
        <position position="71"/>
    </location>
</feature>
<feature type="binding site" evidence="1">
    <location>
        <begin position="20"/>
        <end position="22"/>
    </location>
    <ligand>
        <name>shikimate</name>
        <dbReference type="ChEBI" id="CHEBI:36208"/>
    </ligand>
</feature>
<feature type="binding site" evidence="1">
    <location>
        <position position="67"/>
    </location>
    <ligand>
        <name>shikimate</name>
        <dbReference type="ChEBI" id="CHEBI:36208"/>
    </ligand>
</feature>
<feature type="binding site" evidence="1">
    <location>
        <position position="92"/>
    </location>
    <ligand>
        <name>shikimate</name>
        <dbReference type="ChEBI" id="CHEBI:36208"/>
    </ligand>
</feature>
<feature type="binding site" evidence="1">
    <location>
        <position position="107"/>
    </location>
    <ligand>
        <name>shikimate</name>
        <dbReference type="ChEBI" id="CHEBI:36208"/>
    </ligand>
</feature>
<feature type="binding site" evidence="1">
    <location>
        <begin position="131"/>
        <end position="135"/>
    </location>
    <ligand>
        <name>NADP(+)</name>
        <dbReference type="ChEBI" id="CHEBI:58349"/>
    </ligand>
</feature>
<feature type="binding site" evidence="1">
    <location>
        <position position="220"/>
    </location>
    <ligand>
        <name>NADP(+)</name>
        <dbReference type="ChEBI" id="CHEBI:58349"/>
    </ligand>
</feature>
<feature type="binding site" evidence="1">
    <location>
        <position position="222"/>
    </location>
    <ligand>
        <name>shikimate</name>
        <dbReference type="ChEBI" id="CHEBI:36208"/>
    </ligand>
</feature>
<feature type="binding site" evidence="1">
    <location>
        <position position="243"/>
    </location>
    <ligand>
        <name>NADP(+)</name>
        <dbReference type="ChEBI" id="CHEBI:58349"/>
    </ligand>
</feature>
<evidence type="ECO:0000255" key="1">
    <source>
        <dbReference type="HAMAP-Rule" id="MF_00222"/>
    </source>
</evidence>
<reference key="1">
    <citation type="submission" date="2006-08" db="EMBL/GenBank/DDBJ databases">
        <title>Complete sequence of Maricaulis maris MCS10.</title>
        <authorList>
            <consortium name="US DOE Joint Genome Institute"/>
            <person name="Copeland A."/>
            <person name="Lucas S."/>
            <person name="Lapidus A."/>
            <person name="Barry K."/>
            <person name="Detter J.C."/>
            <person name="Glavina del Rio T."/>
            <person name="Hammon N."/>
            <person name="Israni S."/>
            <person name="Dalin E."/>
            <person name="Tice H."/>
            <person name="Pitluck S."/>
            <person name="Saunders E."/>
            <person name="Brettin T."/>
            <person name="Bruce D."/>
            <person name="Han C."/>
            <person name="Tapia R."/>
            <person name="Gilna P."/>
            <person name="Schmutz J."/>
            <person name="Larimer F."/>
            <person name="Land M."/>
            <person name="Hauser L."/>
            <person name="Kyrpides N."/>
            <person name="Mikhailova N."/>
            <person name="Viollier P."/>
            <person name="Stephens C."/>
            <person name="Richardson P."/>
        </authorList>
    </citation>
    <scope>NUCLEOTIDE SEQUENCE [LARGE SCALE GENOMIC DNA]</scope>
    <source>
        <strain>MCS10</strain>
    </source>
</reference>
<comment type="function">
    <text evidence="1">Involved in the biosynthesis of the chorismate, which leads to the biosynthesis of aromatic amino acids. Catalyzes the reversible NADPH linked reduction of 3-dehydroshikimate (DHSA) to yield shikimate (SA).</text>
</comment>
<comment type="catalytic activity">
    <reaction evidence="1">
        <text>shikimate + NADP(+) = 3-dehydroshikimate + NADPH + H(+)</text>
        <dbReference type="Rhea" id="RHEA:17737"/>
        <dbReference type="ChEBI" id="CHEBI:15378"/>
        <dbReference type="ChEBI" id="CHEBI:16630"/>
        <dbReference type="ChEBI" id="CHEBI:36208"/>
        <dbReference type="ChEBI" id="CHEBI:57783"/>
        <dbReference type="ChEBI" id="CHEBI:58349"/>
        <dbReference type="EC" id="1.1.1.25"/>
    </reaction>
</comment>
<comment type="pathway">
    <text evidence="1">Metabolic intermediate biosynthesis; chorismate biosynthesis; chorismate from D-erythrose 4-phosphate and phosphoenolpyruvate: step 4/7.</text>
</comment>
<comment type="subunit">
    <text evidence="1">Homodimer.</text>
</comment>
<comment type="similarity">
    <text evidence="1">Belongs to the shikimate dehydrogenase family.</text>
</comment>
<sequence>MIPTGAAFVAGVTGDPIAHSLSPVVMRHWIDAAGIDALYAPFPISAGNFDRVVRGLAGAGCRGLNVTLPHKEAALELARTASGPARAVGAANLLTFTPAGIHADNTDIAGFLYALAPANVEFRKARALIFGAGGAARAMLYALLTVGVTDVAICNRNITRAQGLSRDIAPDAGIIPWEARDDALQGRDLIINATSLGLAGRDELALDWQRVRPGSVAFDGIYIPVNTRFIVESRARGVTAIDGLDMLIGQARPSFEAFFGRPAPDLPDMRSRLLEHLGAR</sequence>
<name>AROE_MARMM</name>
<proteinExistence type="inferred from homology"/>
<protein>
    <recommendedName>
        <fullName evidence="1">Shikimate dehydrogenase (NADP(+))</fullName>
        <shortName evidence="1">SDH</shortName>
        <ecNumber evidence="1">1.1.1.25</ecNumber>
    </recommendedName>
</protein>
<organism>
    <name type="scientific">Maricaulis maris (strain MCS10)</name>
    <name type="common">Caulobacter maris</name>
    <dbReference type="NCBI Taxonomy" id="394221"/>
    <lineage>
        <taxon>Bacteria</taxon>
        <taxon>Pseudomonadati</taxon>
        <taxon>Pseudomonadota</taxon>
        <taxon>Alphaproteobacteria</taxon>
        <taxon>Maricaulales</taxon>
        <taxon>Maricaulaceae</taxon>
        <taxon>Maricaulis</taxon>
    </lineage>
</organism>
<dbReference type="EC" id="1.1.1.25" evidence="1"/>
<dbReference type="EMBL" id="CP000449">
    <property type="protein sequence ID" value="ABI67257.1"/>
    <property type="molecule type" value="Genomic_DNA"/>
</dbReference>
<dbReference type="RefSeq" id="WP_011644901.1">
    <property type="nucleotide sequence ID" value="NC_008347.1"/>
</dbReference>
<dbReference type="SMR" id="Q0AKD6"/>
<dbReference type="STRING" id="394221.Mmar10_2976"/>
<dbReference type="KEGG" id="mmr:Mmar10_2976"/>
<dbReference type="eggNOG" id="COG0169">
    <property type="taxonomic scope" value="Bacteria"/>
</dbReference>
<dbReference type="HOGENOM" id="CLU_044063_2_0_5"/>
<dbReference type="OrthoDB" id="9792692at2"/>
<dbReference type="UniPathway" id="UPA00053">
    <property type="reaction ID" value="UER00087"/>
</dbReference>
<dbReference type="Proteomes" id="UP000001964">
    <property type="component" value="Chromosome"/>
</dbReference>
<dbReference type="GO" id="GO:0005829">
    <property type="term" value="C:cytosol"/>
    <property type="evidence" value="ECO:0007669"/>
    <property type="project" value="TreeGrafter"/>
</dbReference>
<dbReference type="GO" id="GO:0050661">
    <property type="term" value="F:NADP binding"/>
    <property type="evidence" value="ECO:0007669"/>
    <property type="project" value="TreeGrafter"/>
</dbReference>
<dbReference type="GO" id="GO:0004764">
    <property type="term" value="F:shikimate 3-dehydrogenase (NADP+) activity"/>
    <property type="evidence" value="ECO:0007669"/>
    <property type="project" value="UniProtKB-UniRule"/>
</dbReference>
<dbReference type="GO" id="GO:0008652">
    <property type="term" value="P:amino acid biosynthetic process"/>
    <property type="evidence" value="ECO:0007669"/>
    <property type="project" value="UniProtKB-KW"/>
</dbReference>
<dbReference type="GO" id="GO:0009073">
    <property type="term" value="P:aromatic amino acid family biosynthetic process"/>
    <property type="evidence" value="ECO:0007669"/>
    <property type="project" value="UniProtKB-KW"/>
</dbReference>
<dbReference type="GO" id="GO:0009423">
    <property type="term" value="P:chorismate biosynthetic process"/>
    <property type="evidence" value="ECO:0007669"/>
    <property type="project" value="UniProtKB-UniRule"/>
</dbReference>
<dbReference type="GO" id="GO:0019632">
    <property type="term" value="P:shikimate metabolic process"/>
    <property type="evidence" value="ECO:0007669"/>
    <property type="project" value="TreeGrafter"/>
</dbReference>
<dbReference type="CDD" id="cd01065">
    <property type="entry name" value="NAD_bind_Shikimate_DH"/>
    <property type="match status" value="1"/>
</dbReference>
<dbReference type="Gene3D" id="3.40.50.10860">
    <property type="entry name" value="Leucine Dehydrogenase, chain A, domain 1"/>
    <property type="match status" value="1"/>
</dbReference>
<dbReference type="Gene3D" id="3.40.50.720">
    <property type="entry name" value="NAD(P)-binding Rossmann-like Domain"/>
    <property type="match status" value="1"/>
</dbReference>
<dbReference type="HAMAP" id="MF_00222">
    <property type="entry name" value="Shikimate_DH_AroE"/>
    <property type="match status" value="1"/>
</dbReference>
<dbReference type="InterPro" id="IPR046346">
    <property type="entry name" value="Aminoacid_DH-like_N_sf"/>
</dbReference>
<dbReference type="InterPro" id="IPR036291">
    <property type="entry name" value="NAD(P)-bd_dom_sf"/>
</dbReference>
<dbReference type="InterPro" id="IPR041121">
    <property type="entry name" value="SDH_C"/>
</dbReference>
<dbReference type="InterPro" id="IPR013708">
    <property type="entry name" value="Shikimate_DH-bd_N"/>
</dbReference>
<dbReference type="InterPro" id="IPR022893">
    <property type="entry name" value="Shikimate_DH_fam"/>
</dbReference>
<dbReference type="InterPro" id="IPR006151">
    <property type="entry name" value="Shikm_DH/Glu-tRNA_Rdtase"/>
</dbReference>
<dbReference type="PANTHER" id="PTHR21089:SF1">
    <property type="entry name" value="BIFUNCTIONAL 3-DEHYDROQUINATE DEHYDRATASE_SHIKIMATE DEHYDROGENASE, CHLOROPLASTIC"/>
    <property type="match status" value="1"/>
</dbReference>
<dbReference type="PANTHER" id="PTHR21089">
    <property type="entry name" value="SHIKIMATE DEHYDROGENASE"/>
    <property type="match status" value="1"/>
</dbReference>
<dbReference type="Pfam" id="PF18317">
    <property type="entry name" value="SDH_C"/>
    <property type="match status" value="1"/>
</dbReference>
<dbReference type="Pfam" id="PF01488">
    <property type="entry name" value="Shikimate_DH"/>
    <property type="match status" value="1"/>
</dbReference>
<dbReference type="Pfam" id="PF08501">
    <property type="entry name" value="Shikimate_dh_N"/>
    <property type="match status" value="1"/>
</dbReference>
<dbReference type="SUPFAM" id="SSF53223">
    <property type="entry name" value="Aminoacid dehydrogenase-like, N-terminal domain"/>
    <property type="match status" value="1"/>
</dbReference>
<dbReference type="SUPFAM" id="SSF51735">
    <property type="entry name" value="NAD(P)-binding Rossmann-fold domains"/>
    <property type="match status" value="1"/>
</dbReference>
<gene>
    <name evidence="1" type="primary">aroE</name>
    <name type="ordered locus">Mmar10_2976</name>
</gene>
<keyword id="KW-0028">Amino-acid biosynthesis</keyword>
<keyword id="KW-0057">Aromatic amino acid biosynthesis</keyword>
<keyword id="KW-0521">NADP</keyword>
<keyword id="KW-0560">Oxidoreductase</keyword>
<keyword id="KW-1185">Reference proteome</keyword>